<gene>
    <name evidence="1" type="primary">tpiA</name>
    <name type="ordered locus">azo1394</name>
</gene>
<name>TPIS_AZOSB</name>
<organism>
    <name type="scientific">Azoarcus sp. (strain BH72)</name>
    <dbReference type="NCBI Taxonomy" id="418699"/>
    <lineage>
        <taxon>Bacteria</taxon>
        <taxon>Pseudomonadati</taxon>
        <taxon>Pseudomonadota</taxon>
        <taxon>Betaproteobacteria</taxon>
        <taxon>Rhodocyclales</taxon>
        <taxon>Zoogloeaceae</taxon>
        <taxon>Azoarcus</taxon>
    </lineage>
</organism>
<comment type="function">
    <text evidence="1">Involved in the gluconeogenesis. Catalyzes stereospecifically the conversion of dihydroxyacetone phosphate (DHAP) to D-glyceraldehyde-3-phosphate (G3P).</text>
</comment>
<comment type="catalytic activity">
    <reaction evidence="1">
        <text>D-glyceraldehyde 3-phosphate = dihydroxyacetone phosphate</text>
        <dbReference type="Rhea" id="RHEA:18585"/>
        <dbReference type="ChEBI" id="CHEBI:57642"/>
        <dbReference type="ChEBI" id="CHEBI:59776"/>
        <dbReference type="EC" id="5.3.1.1"/>
    </reaction>
</comment>
<comment type="pathway">
    <text evidence="1">Carbohydrate biosynthesis; gluconeogenesis.</text>
</comment>
<comment type="pathway">
    <text evidence="1">Carbohydrate degradation; glycolysis; D-glyceraldehyde 3-phosphate from glycerone phosphate: step 1/1.</text>
</comment>
<comment type="subunit">
    <text evidence="1">Homodimer.</text>
</comment>
<comment type="subcellular location">
    <subcellularLocation>
        <location evidence="1">Cytoplasm</location>
    </subcellularLocation>
</comment>
<comment type="similarity">
    <text evidence="1">Belongs to the triosephosphate isomerase family.</text>
</comment>
<accession>A1K5A6</accession>
<proteinExistence type="inferred from homology"/>
<protein>
    <recommendedName>
        <fullName evidence="1">Triosephosphate isomerase</fullName>
        <shortName evidence="1">TIM</shortName>
        <shortName evidence="1">TPI</shortName>
        <ecNumber evidence="1">5.3.1.1</ecNumber>
    </recommendedName>
    <alternativeName>
        <fullName evidence="1">Triose-phosphate isomerase</fullName>
    </alternativeName>
</protein>
<keyword id="KW-0963">Cytoplasm</keyword>
<keyword id="KW-0312">Gluconeogenesis</keyword>
<keyword id="KW-0324">Glycolysis</keyword>
<keyword id="KW-0413">Isomerase</keyword>
<keyword id="KW-1185">Reference proteome</keyword>
<evidence type="ECO:0000255" key="1">
    <source>
        <dbReference type="HAMAP-Rule" id="MF_00147"/>
    </source>
</evidence>
<sequence length="242" mass="25360">MTTKLIAGNWKLNGSLAKNAALIDELRRAEMHCVVCVPYPYLAQAQALVAGSLIELGAQDVSEYEQGAYTGEVSAAMLVEFGCRYVIVGHSERRALFGDSDQVVGRKAASALAAGLTPIVCVGETLAERELGEVEAVIRRQLQAVADCVGGEALPTLVVAYEPVWAIGTGRSATPEQVAQTHGFIRAWFSARCDASAVRILYGGSVKPENAAVLFSTDDVDGGLIGGASLVGSDFVAICRAA</sequence>
<reference key="1">
    <citation type="journal article" date="2006" name="Nat. Biotechnol.">
        <title>Complete genome of the mutualistic, N2-fixing grass endophyte Azoarcus sp. strain BH72.</title>
        <authorList>
            <person name="Krause A."/>
            <person name="Ramakumar A."/>
            <person name="Bartels D."/>
            <person name="Battistoni F."/>
            <person name="Bekel T."/>
            <person name="Boch J."/>
            <person name="Boehm M."/>
            <person name="Friedrich F."/>
            <person name="Hurek T."/>
            <person name="Krause L."/>
            <person name="Linke B."/>
            <person name="McHardy A.C."/>
            <person name="Sarkar A."/>
            <person name="Schneiker S."/>
            <person name="Syed A.A."/>
            <person name="Thauer R."/>
            <person name="Vorhoelter F.-J."/>
            <person name="Weidner S."/>
            <person name="Puehler A."/>
            <person name="Reinhold-Hurek B."/>
            <person name="Kaiser O."/>
            <person name="Goesmann A."/>
        </authorList>
    </citation>
    <scope>NUCLEOTIDE SEQUENCE [LARGE SCALE GENOMIC DNA]</scope>
    <source>
        <strain>BH72</strain>
    </source>
</reference>
<feature type="chain" id="PRO_0000307424" description="Triosephosphate isomerase">
    <location>
        <begin position="1"/>
        <end position="242"/>
    </location>
</feature>
<feature type="active site" description="Electrophile" evidence="1">
    <location>
        <position position="90"/>
    </location>
</feature>
<feature type="active site" description="Proton acceptor" evidence="1">
    <location>
        <position position="162"/>
    </location>
</feature>
<feature type="binding site" evidence="1">
    <location>
        <begin position="9"/>
        <end position="11"/>
    </location>
    <ligand>
        <name>substrate</name>
    </ligand>
</feature>
<feature type="binding site" evidence="1">
    <location>
        <position position="168"/>
    </location>
    <ligand>
        <name>substrate</name>
    </ligand>
</feature>
<feature type="binding site" evidence="1">
    <location>
        <position position="205"/>
    </location>
    <ligand>
        <name>substrate</name>
    </ligand>
</feature>
<feature type="binding site" evidence="1">
    <location>
        <begin position="226"/>
        <end position="227"/>
    </location>
    <ligand>
        <name>substrate</name>
    </ligand>
</feature>
<dbReference type="EC" id="5.3.1.1" evidence="1"/>
<dbReference type="EMBL" id="AM406670">
    <property type="protein sequence ID" value="CAL94011.1"/>
    <property type="molecule type" value="Genomic_DNA"/>
</dbReference>
<dbReference type="RefSeq" id="WP_011765127.1">
    <property type="nucleotide sequence ID" value="NC_008702.1"/>
</dbReference>
<dbReference type="SMR" id="A1K5A6"/>
<dbReference type="STRING" id="62928.azo1394"/>
<dbReference type="KEGG" id="azo:azo1394"/>
<dbReference type="eggNOG" id="COG0149">
    <property type="taxonomic scope" value="Bacteria"/>
</dbReference>
<dbReference type="HOGENOM" id="CLU_024251_2_3_4"/>
<dbReference type="UniPathway" id="UPA00109">
    <property type="reaction ID" value="UER00189"/>
</dbReference>
<dbReference type="UniPathway" id="UPA00138"/>
<dbReference type="Proteomes" id="UP000002588">
    <property type="component" value="Chromosome"/>
</dbReference>
<dbReference type="GO" id="GO:0005829">
    <property type="term" value="C:cytosol"/>
    <property type="evidence" value="ECO:0007669"/>
    <property type="project" value="TreeGrafter"/>
</dbReference>
<dbReference type="GO" id="GO:0004807">
    <property type="term" value="F:triose-phosphate isomerase activity"/>
    <property type="evidence" value="ECO:0007669"/>
    <property type="project" value="UniProtKB-UniRule"/>
</dbReference>
<dbReference type="GO" id="GO:0006094">
    <property type="term" value="P:gluconeogenesis"/>
    <property type="evidence" value="ECO:0007669"/>
    <property type="project" value="UniProtKB-UniRule"/>
</dbReference>
<dbReference type="GO" id="GO:0046166">
    <property type="term" value="P:glyceraldehyde-3-phosphate biosynthetic process"/>
    <property type="evidence" value="ECO:0007669"/>
    <property type="project" value="TreeGrafter"/>
</dbReference>
<dbReference type="GO" id="GO:0019563">
    <property type="term" value="P:glycerol catabolic process"/>
    <property type="evidence" value="ECO:0007669"/>
    <property type="project" value="TreeGrafter"/>
</dbReference>
<dbReference type="GO" id="GO:0006096">
    <property type="term" value="P:glycolytic process"/>
    <property type="evidence" value="ECO:0007669"/>
    <property type="project" value="UniProtKB-UniRule"/>
</dbReference>
<dbReference type="CDD" id="cd00311">
    <property type="entry name" value="TIM"/>
    <property type="match status" value="1"/>
</dbReference>
<dbReference type="FunFam" id="3.20.20.70:FF:000016">
    <property type="entry name" value="Triosephosphate isomerase"/>
    <property type="match status" value="1"/>
</dbReference>
<dbReference type="Gene3D" id="3.20.20.70">
    <property type="entry name" value="Aldolase class I"/>
    <property type="match status" value="1"/>
</dbReference>
<dbReference type="HAMAP" id="MF_00147_B">
    <property type="entry name" value="TIM_B"/>
    <property type="match status" value="1"/>
</dbReference>
<dbReference type="InterPro" id="IPR013785">
    <property type="entry name" value="Aldolase_TIM"/>
</dbReference>
<dbReference type="InterPro" id="IPR035990">
    <property type="entry name" value="TIM_sf"/>
</dbReference>
<dbReference type="InterPro" id="IPR022896">
    <property type="entry name" value="TrioseP_Isoase_bac/euk"/>
</dbReference>
<dbReference type="InterPro" id="IPR000652">
    <property type="entry name" value="Triosephosphate_isomerase"/>
</dbReference>
<dbReference type="InterPro" id="IPR020861">
    <property type="entry name" value="Triosephosphate_isomerase_AS"/>
</dbReference>
<dbReference type="NCBIfam" id="TIGR00419">
    <property type="entry name" value="tim"/>
    <property type="match status" value="1"/>
</dbReference>
<dbReference type="PANTHER" id="PTHR21139">
    <property type="entry name" value="TRIOSEPHOSPHATE ISOMERASE"/>
    <property type="match status" value="1"/>
</dbReference>
<dbReference type="PANTHER" id="PTHR21139:SF42">
    <property type="entry name" value="TRIOSEPHOSPHATE ISOMERASE"/>
    <property type="match status" value="1"/>
</dbReference>
<dbReference type="Pfam" id="PF00121">
    <property type="entry name" value="TIM"/>
    <property type="match status" value="1"/>
</dbReference>
<dbReference type="SUPFAM" id="SSF51351">
    <property type="entry name" value="Triosephosphate isomerase (TIM)"/>
    <property type="match status" value="1"/>
</dbReference>
<dbReference type="PROSITE" id="PS00171">
    <property type="entry name" value="TIM_1"/>
    <property type="match status" value="1"/>
</dbReference>
<dbReference type="PROSITE" id="PS51440">
    <property type="entry name" value="TIM_2"/>
    <property type="match status" value="1"/>
</dbReference>